<gene>
    <name type="primary">gufA</name>
</gene>
<sequence>MGAGLVASLLAGTATGLGALPVLVTSELSRKAQGPDVGLQRGRDAGGQSFSLVIPAMELVRGQGHDGPSAALRVAAGVLLGGLFLRVWHDLMPHEHALKGHEGHGGTKWNSALLFVLAMTLHNFPEGLAVGVSFAAPQPELGLSVALGIGAQNIPEGLVVALALRASGASASRAAFLALLTGMVEPVGALFGVLALSLSSALLPWGLAFAGGAMLYVISHEMIPESHRGGFEREATTGLMWGFVLALVLDMSLG</sequence>
<organism>
    <name type="scientific">Myxococcus xanthus</name>
    <dbReference type="NCBI Taxonomy" id="34"/>
    <lineage>
        <taxon>Bacteria</taxon>
        <taxon>Pseudomonadati</taxon>
        <taxon>Myxococcota</taxon>
        <taxon>Myxococcia</taxon>
        <taxon>Myxococcales</taxon>
        <taxon>Cystobacterineae</taxon>
        <taxon>Myxococcaceae</taxon>
        <taxon>Myxococcus</taxon>
    </lineage>
</organism>
<reference key="1">
    <citation type="journal article" date="1993" name="Mol. Microbiol.">
        <title>Light-induced carotenogenesis in Myxococcus xanthus: DNA sequence analysis of the carR region.</title>
        <authorList>
            <person name="McGowan S.J."/>
            <person name="Gorham H.C."/>
            <person name="Hodgson D.A."/>
        </authorList>
    </citation>
    <scope>NUCLEOTIDE SEQUENCE [GENOMIC DNA]</scope>
    <source>
        <strain>DK101</strain>
    </source>
</reference>
<name>GUFA_MYXXA</name>
<comment type="function">
    <text evidence="1">Mediates the uptake of Zn(2+).</text>
</comment>
<comment type="subunit">
    <text evidence="1">Homodimer.</text>
</comment>
<comment type="subcellular location">
    <subcellularLocation>
        <location>Cell inner membrane</location>
        <topology evidence="3">Multi-pass membrane protein</topology>
    </subcellularLocation>
</comment>
<comment type="similarity">
    <text evidence="3">Belongs to the ZIP transporter (TC 2.A.5) family.</text>
</comment>
<dbReference type="EMBL" id="X71062">
    <property type="protein sequence ID" value="CAA50385.1"/>
    <property type="molecule type" value="Genomic_DNA"/>
</dbReference>
<dbReference type="EMBL" id="X71062">
    <property type="protein sequence ID" value="CAA50380.1"/>
    <property type="molecule type" value="Genomic_DNA"/>
</dbReference>
<dbReference type="PIR" id="S39876">
    <property type="entry name" value="S39876"/>
</dbReference>
<dbReference type="SMR" id="Q06916"/>
<dbReference type="GO" id="GO:0005886">
    <property type="term" value="C:plasma membrane"/>
    <property type="evidence" value="ECO:0007669"/>
    <property type="project" value="UniProtKB-SubCell"/>
</dbReference>
<dbReference type="GO" id="GO:0046872">
    <property type="term" value="F:metal ion binding"/>
    <property type="evidence" value="ECO:0007669"/>
    <property type="project" value="UniProtKB-KW"/>
</dbReference>
<dbReference type="GO" id="GO:0005385">
    <property type="term" value="F:zinc ion transmembrane transporter activity"/>
    <property type="evidence" value="ECO:0007669"/>
    <property type="project" value="TreeGrafter"/>
</dbReference>
<dbReference type="InterPro" id="IPR003689">
    <property type="entry name" value="ZIP"/>
</dbReference>
<dbReference type="PANTHER" id="PTHR11040:SF211">
    <property type="entry name" value="ZINC TRANSPORTER ZIP11"/>
    <property type="match status" value="1"/>
</dbReference>
<dbReference type="PANTHER" id="PTHR11040">
    <property type="entry name" value="ZINC/IRON TRANSPORTER"/>
    <property type="match status" value="1"/>
</dbReference>
<dbReference type="Pfam" id="PF02535">
    <property type="entry name" value="Zip"/>
    <property type="match status" value="1"/>
</dbReference>
<evidence type="ECO:0000250" key="1">
    <source>
        <dbReference type="UniProtKB" id="A0A0H3LM39"/>
    </source>
</evidence>
<evidence type="ECO:0000255" key="2"/>
<evidence type="ECO:0000305" key="3"/>
<accession>Q06916</accession>
<keyword id="KW-0997">Cell inner membrane</keyword>
<keyword id="KW-1003">Cell membrane</keyword>
<keyword id="KW-0472">Membrane</keyword>
<keyword id="KW-0479">Metal-binding</keyword>
<keyword id="KW-0812">Transmembrane</keyword>
<keyword id="KW-1133">Transmembrane helix</keyword>
<keyword id="KW-0862">Zinc</keyword>
<feature type="chain" id="PRO_0000083877" description="Zinc transporter GufA">
    <location>
        <begin position="1"/>
        <end position="254"/>
    </location>
</feature>
<feature type="transmembrane region" description="Helical" evidence="2">
    <location>
        <begin position="4"/>
        <end position="24"/>
    </location>
</feature>
<feature type="transmembrane region" description="Helical" evidence="2">
    <location>
        <begin position="74"/>
        <end position="94"/>
    </location>
</feature>
<feature type="transmembrane region" description="Helical" evidence="2">
    <location>
        <begin position="112"/>
        <end position="132"/>
    </location>
</feature>
<feature type="transmembrane region" description="Helical" evidence="2">
    <location>
        <begin position="143"/>
        <end position="163"/>
    </location>
</feature>
<feature type="transmembrane region" description="Helical" evidence="2">
    <location>
        <begin position="176"/>
        <end position="196"/>
    </location>
</feature>
<feature type="transmembrane region" description="Helical" evidence="2">
    <location>
        <begin position="198"/>
        <end position="218"/>
    </location>
</feature>
<feature type="transmembrane region" description="Helical" evidence="2">
    <location>
        <begin position="234"/>
        <end position="254"/>
    </location>
</feature>
<feature type="binding site" description="M2 metal binding site" evidence="1">
    <location>
        <position position="123"/>
    </location>
    <ligand>
        <name>Zn(2+)</name>
        <dbReference type="ChEBI" id="CHEBI:29105"/>
        <label>2</label>
    </ligand>
</feature>
<feature type="binding site" description="M1 metal binding site" evidence="1">
    <location>
        <position position="126"/>
    </location>
    <ligand>
        <name>Zn(2+)</name>
        <dbReference type="ChEBI" id="CHEBI:29105"/>
        <label>1</label>
    </ligand>
</feature>
<feature type="binding site" description="M2 metal binding site" evidence="1">
    <location>
        <position position="126"/>
    </location>
    <ligand>
        <name>Zn(2+)</name>
        <dbReference type="ChEBI" id="CHEBI:29105"/>
        <label>2</label>
    </ligand>
</feature>
<feature type="binding site" description="M1 metal binding site" evidence="1">
    <location>
        <position position="152"/>
    </location>
    <ligand>
        <name>Zn(2+)</name>
        <dbReference type="ChEBI" id="CHEBI:29105"/>
        <label>1</label>
    </ligand>
</feature>
<feature type="binding site" description="M2 metal binding site" evidence="1">
    <location>
        <position position="153"/>
    </location>
    <ligand>
        <name>Zn(2+)</name>
        <dbReference type="ChEBI" id="CHEBI:29105"/>
        <label>2</label>
    </ligand>
</feature>
<feature type="binding site" description="M1 metal binding site" evidence="1">
    <location>
        <position position="156"/>
    </location>
    <ligand>
        <name>Zn(2+)</name>
        <dbReference type="ChEBI" id="CHEBI:29105"/>
        <label>1</label>
    </ligand>
</feature>
<feature type="binding site" description="M2 metal binding site" evidence="1">
    <location>
        <position position="156"/>
    </location>
    <ligand>
        <name>Zn(2+)</name>
        <dbReference type="ChEBI" id="CHEBI:29105"/>
        <label>2</label>
    </ligand>
</feature>
<feature type="binding site" description="M2 metal binding site" evidence="1">
    <location>
        <position position="185"/>
    </location>
    <ligand>
        <name>Zn(2+)</name>
        <dbReference type="ChEBI" id="CHEBI:29105"/>
        <label>2</label>
    </ligand>
</feature>
<protein>
    <recommendedName>
        <fullName evidence="3">Zinc transporter GufA</fullName>
    </recommendedName>
</protein>
<proteinExistence type="inferred from homology"/>